<protein>
    <recommendedName>
        <fullName evidence="7">3-ketoacyl-CoA thiolase B, peroxisomal</fullName>
        <ecNumber evidence="1">2.3.1.155</ecNumber>
        <ecNumber evidence="8">2.3.1.16</ecNumber>
        <ecNumber evidence="1">2.3.1.9</ecNumber>
    </recommendedName>
    <alternativeName>
        <fullName>Acetyl-CoA acyltransferase B</fullName>
    </alternativeName>
    <alternativeName>
        <fullName>Beta-ketothiolase B</fullName>
    </alternativeName>
    <alternativeName>
        <fullName>Peroxisomal 3-oxoacyl-CoA thiolase B</fullName>
    </alternativeName>
</protein>
<comment type="function">
    <text evidence="3 8">Responsible for the thiolytic cleavage of straight chain 3-keto fatty acyl-CoAs (3-oxoacyl-CoAs) (Probable). Plays an important role in fatty acid peroxisomal beta-oxidation (Probable). Catalyzes the cleavage of short, medium, long, and very long straight chain 3-oxoacyl-CoAs (By similarity).</text>
</comment>
<comment type="catalytic activity">
    <reaction evidence="8">
        <text>an acyl-CoA + acetyl-CoA = a 3-oxoacyl-CoA + CoA</text>
        <dbReference type="Rhea" id="RHEA:21564"/>
        <dbReference type="ChEBI" id="CHEBI:57287"/>
        <dbReference type="ChEBI" id="CHEBI:57288"/>
        <dbReference type="ChEBI" id="CHEBI:58342"/>
        <dbReference type="ChEBI" id="CHEBI:90726"/>
        <dbReference type="EC" id="2.3.1.16"/>
    </reaction>
    <physiologicalReaction direction="right-to-left" evidence="8">
        <dbReference type="Rhea" id="RHEA:21566"/>
    </physiologicalReaction>
</comment>
<comment type="catalytic activity">
    <reaction evidence="1">
        <text>2 acetyl-CoA = acetoacetyl-CoA + CoA</text>
        <dbReference type="Rhea" id="RHEA:21036"/>
        <dbReference type="ChEBI" id="CHEBI:57286"/>
        <dbReference type="ChEBI" id="CHEBI:57287"/>
        <dbReference type="ChEBI" id="CHEBI:57288"/>
        <dbReference type="EC" id="2.3.1.9"/>
    </reaction>
    <physiologicalReaction direction="right-to-left" evidence="1">
        <dbReference type="Rhea" id="RHEA:21038"/>
    </physiologicalReaction>
</comment>
<comment type="catalytic activity">
    <reaction evidence="8">
        <text>hexanoyl-CoA + acetyl-CoA = 3-oxooctanoyl-CoA + CoA</text>
        <dbReference type="Rhea" id="RHEA:31203"/>
        <dbReference type="ChEBI" id="CHEBI:57287"/>
        <dbReference type="ChEBI" id="CHEBI:57288"/>
        <dbReference type="ChEBI" id="CHEBI:62619"/>
        <dbReference type="ChEBI" id="CHEBI:62620"/>
    </reaction>
    <physiologicalReaction direction="right-to-left" evidence="8">
        <dbReference type="Rhea" id="RHEA:31205"/>
    </physiologicalReaction>
</comment>
<comment type="catalytic activity">
    <reaction evidence="1">
        <text>tetradecanoyl-CoA + acetyl-CoA = 3-oxohexadecanoyl-CoA + CoA</text>
        <dbReference type="Rhea" id="RHEA:18161"/>
        <dbReference type="ChEBI" id="CHEBI:57287"/>
        <dbReference type="ChEBI" id="CHEBI:57288"/>
        <dbReference type="ChEBI" id="CHEBI:57349"/>
        <dbReference type="ChEBI" id="CHEBI:57385"/>
        <dbReference type="EC" id="2.3.1.155"/>
    </reaction>
    <physiologicalReaction direction="right-to-left" evidence="1">
        <dbReference type="Rhea" id="RHEA:18163"/>
    </physiologicalReaction>
</comment>
<comment type="catalytic activity">
    <reaction evidence="1">
        <text>3-oxohexadecanedioyl-CoA + CoA = tetradecanedioyl-CoA + acetyl-CoA</text>
        <dbReference type="Rhea" id="RHEA:40343"/>
        <dbReference type="ChEBI" id="CHEBI:57287"/>
        <dbReference type="ChEBI" id="CHEBI:57288"/>
        <dbReference type="ChEBI" id="CHEBI:77081"/>
        <dbReference type="ChEBI" id="CHEBI:77084"/>
    </reaction>
    <physiologicalReaction direction="left-to-right" evidence="1">
        <dbReference type="Rhea" id="RHEA:40344"/>
    </physiologicalReaction>
</comment>
<comment type="catalytic activity">
    <reaction evidence="2">
        <text>3-oxo-(6Z,9Z,12Z,15Z,18Z,21Z)-tetracosahexaenoyl-CoA + CoA = (4Z,7Z,10Z,13Z,16Z,19Z)-docosahexaenoyl-CoA + acetyl-CoA</text>
        <dbReference type="Rhea" id="RHEA:39131"/>
        <dbReference type="ChEBI" id="CHEBI:57287"/>
        <dbReference type="ChEBI" id="CHEBI:57288"/>
        <dbReference type="ChEBI" id="CHEBI:74298"/>
        <dbReference type="ChEBI" id="CHEBI:74304"/>
    </reaction>
    <physiologicalReaction direction="left-to-right" evidence="2">
        <dbReference type="Rhea" id="RHEA:39132"/>
    </physiologicalReaction>
</comment>
<comment type="pathway">
    <text evidence="8">Lipid metabolism; peroxisomal fatty acid beta-oxidation.</text>
</comment>
<comment type="subunit">
    <text evidence="2">Homodimer. Interacts (via PTS2-type peroxisomal targeting signal region) with PEX7; leading to its translocation into peroxisomes.</text>
</comment>
<comment type="subcellular location">
    <subcellularLocation>
        <location evidence="2">Peroxisome</location>
    </subcellularLocation>
    <text evidence="2">Transported into peroxisomes following association with PEX7.</text>
</comment>
<comment type="tissue specificity">
    <text evidence="6">Mainly expressed in liver; weaker levels in kidney, intestine and white adipose tissue.</text>
</comment>
<comment type="domain">
    <text evidence="2">The PTS2-type peroxisomal targeting signal, which mediates interaction with PEX7 and localization to peroxisomes, is cleaved following import into peroxisomes.</text>
</comment>
<comment type="similarity">
    <text evidence="7">Belongs to the thiolase-like superfamily. Thiolase family.</text>
</comment>
<gene>
    <name evidence="9" type="primary">Acaa1b</name>
    <name type="synonym">Acaa1</name>
</gene>
<name>THIKB_MOUSE</name>
<evidence type="ECO:0000250" key="1">
    <source>
        <dbReference type="UniProtKB" id="P07871"/>
    </source>
</evidence>
<evidence type="ECO:0000250" key="2">
    <source>
        <dbReference type="UniProtKB" id="P09110"/>
    </source>
</evidence>
<evidence type="ECO:0000250" key="3">
    <source>
        <dbReference type="UniProtKB" id="P21775"/>
    </source>
</evidence>
<evidence type="ECO:0000250" key="4">
    <source>
        <dbReference type="UniProtKB" id="P42765"/>
    </source>
</evidence>
<evidence type="ECO:0000250" key="5">
    <source>
        <dbReference type="UniProtKB" id="Q921H8"/>
    </source>
</evidence>
<evidence type="ECO:0000269" key="6">
    <source>
    </source>
</evidence>
<evidence type="ECO:0000305" key="7"/>
<evidence type="ECO:0000305" key="8">
    <source>
    </source>
</evidence>
<evidence type="ECO:0000312" key="9">
    <source>
        <dbReference type="MGI" id="MGI:3605455"/>
    </source>
</evidence>
<evidence type="ECO:0007744" key="10">
    <source>
    </source>
</evidence>
<organism>
    <name type="scientific">Mus musculus</name>
    <name type="common">Mouse</name>
    <dbReference type="NCBI Taxonomy" id="10090"/>
    <lineage>
        <taxon>Eukaryota</taxon>
        <taxon>Metazoa</taxon>
        <taxon>Chordata</taxon>
        <taxon>Craniata</taxon>
        <taxon>Vertebrata</taxon>
        <taxon>Euteleostomi</taxon>
        <taxon>Mammalia</taxon>
        <taxon>Eutheria</taxon>
        <taxon>Euarchontoglires</taxon>
        <taxon>Glires</taxon>
        <taxon>Rodentia</taxon>
        <taxon>Myomorpha</taxon>
        <taxon>Muroidea</taxon>
        <taxon>Muridae</taxon>
        <taxon>Murinae</taxon>
        <taxon>Mus</taxon>
        <taxon>Mus</taxon>
    </lineage>
</organism>
<feature type="transit peptide" description="Peroxisome" evidence="2">
    <location>
        <begin position="1"/>
        <end position="26"/>
    </location>
</feature>
<feature type="chain" id="PRO_0000034069" description="3-ketoacyl-CoA thiolase B, peroxisomal">
    <location>
        <begin position="27"/>
        <end position="424"/>
    </location>
</feature>
<feature type="region of interest" description="PTS2-type peroxisomal targeting signal" evidence="2">
    <location>
        <begin position="1"/>
        <end position="26"/>
    </location>
</feature>
<feature type="active site" description="Acyl-thioester intermediate" evidence="4">
    <location>
        <position position="123"/>
    </location>
</feature>
<feature type="active site" description="Proton donor/acceptor" evidence="4">
    <location>
        <position position="408"/>
    </location>
</feature>
<feature type="binding site" evidence="4">
    <location>
        <position position="249"/>
    </location>
    <ligand>
        <name>CoA</name>
        <dbReference type="ChEBI" id="CHEBI:57287"/>
    </ligand>
</feature>
<feature type="binding site" evidence="4">
    <location>
        <position position="252"/>
    </location>
    <ligand>
        <name>CoA</name>
        <dbReference type="ChEBI" id="CHEBI:57287"/>
    </ligand>
</feature>
<feature type="binding site" evidence="4">
    <location>
        <position position="276"/>
    </location>
    <ligand>
        <name>CoA</name>
        <dbReference type="ChEBI" id="CHEBI:57287"/>
    </ligand>
</feature>
<feature type="site" description="Increases nucleophilicity of active site Cys" evidence="4">
    <location>
        <position position="377"/>
    </location>
</feature>
<feature type="modified residue" description="N6-acetyllysine" evidence="10">
    <location>
        <position position="173"/>
    </location>
</feature>
<feature type="modified residue" description="N6-acetyllysine" evidence="5">
    <location>
        <position position="234"/>
    </location>
</feature>
<dbReference type="EC" id="2.3.1.155" evidence="1"/>
<dbReference type="EC" id="2.3.1.16" evidence="8"/>
<dbReference type="EC" id="2.3.1.9" evidence="1"/>
<dbReference type="EMBL" id="AY273812">
    <property type="protein sequence ID" value="AAP31669.1"/>
    <property type="molecule type" value="mRNA"/>
</dbReference>
<dbReference type="EMBL" id="BC019882">
    <property type="protein sequence ID" value="AAH19882.1"/>
    <property type="molecule type" value="mRNA"/>
</dbReference>
<dbReference type="CCDS" id="CCDS23608.1"/>
<dbReference type="RefSeq" id="NP_666342.1">
    <property type="nucleotide sequence ID" value="NM_146230.4"/>
</dbReference>
<dbReference type="SMR" id="Q8VCH0"/>
<dbReference type="BioGRID" id="231703">
    <property type="interactions" value="1"/>
</dbReference>
<dbReference type="FunCoup" id="Q8VCH0">
    <property type="interactions" value="1730"/>
</dbReference>
<dbReference type="STRING" id="10090.ENSMUSP00000010795"/>
<dbReference type="CarbonylDB" id="Q8VCH0"/>
<dbReference type="GlyGen" id="Q8VCH0">
    <property type="glycosylation" value="2 sites, 1 N-linked glycan (1 site), 1 O-linked glycan (1 site)"/>
</dbReference>
<dbReference type="iPTMnet" id="Q8VCH0"/>
<dbReference type="PhosphoSitePlus" id="Q8VCH0"/>
<dbReference type="SwissPalm" id="Q8VCH0"/>
<dbReference type="jPOST" id="Q8VCH0"/>
<dbReference type="PaxDb" id="10090-ENSMUSP00000010795"/>
<dbReference type="PeptideAtlas" id="Q8VCH0"/>
<dbReference type="ProteomicsDB" id="262811"/>
<dbReference type="Pumba" id="Q8VCH0"/>
<dbReference type="Ensembl" id="ENSMUST00000010795.5">
    <property type="protein sequence ID" value="ENSMUSP00000010795.5"/>
    <property type="gene ID" value="ENSMUSG00000010651.5"/>
</dbReference>
<dbReference type="GeneID" id="235674"/>
<dbReference type="KEGG" id="mmu:235674"/>
<dbReference type="UCSC" id="uc009saj.1">
    <property type="organism name" value="mouse"/>
</dbReference>
<dbReference type="AGR" id="MGI:3605455"/>
<dbReference type="CTD" id="235674"/>
<dbReference type="MGI" id="MGI:3605455">
    <property type="gene designation" value="Acaa1b"/>
</dbReference>
<dbReference type="VEuPathDB" id="HostDB:ENSMUSG00000010651"/>
<dbReference type="eggNOG" id="KOG1389">
    <property type="taxonomic scope" value="Eukaryota"/>
</dbReference>
<dbReference type="GeneTree" id="ENSGT01030000234626"/>
<dbReference type="HOGENOM" id="CLU_031026_1_1_1"/>
<dbReference type="InParanoid" id="Q8VCH0"/>
<dbReference type="OMA" id="NASPMND"/>
<dbReference type="OrthoDB" id="5404651at2759"/>
<dbReference type="PhylomeDB" id="Q8VCH0"/>
<dbReference type="TreeFam" id="TF332308"/>
<dbReference type="BRENDA" id="2.3.1.16">
    <property type="organism ID" value="3474"/>
</dbReference>
<dbReference type="Reactome" id="R-MMU-2046106">
    <property type="pathway name" value="alpha-linolenic acid (ALA) metabolism"/>
</dbReference>
<dbReference type="Reactome" id="R-MMU-390247">
    <property type="pathway name" value="Beta-oxidation of very long chain fatty acids"/>
</dbReference>
<dbReference type="Reactome" id="R-MMU-6798695">
    <property type="pathway name" value="Neutrophil degranulation"/>
</dbReference>
<dbReference type="Reactome" id="R-MMU-9033241">
    <property type="pathway name" value="Peroxisomal protein import"/>
</dbReference>
<dbReference type="UniPathway" id="UPA00661"/>
<dbReference type="BioGRID-ORCS" id="235674">
    <property type="hits" value="0 hits in 79 CRISPR screens"/>
</dbReference>
<dbReference type="ChiTaRS" id="Acaa1b">
    <property type="organism name" value="mouse"/>
</dbReference>
<dbReference type="PRO" id="PR:Q8VCH0"/>
<dbReference type="Proteomes" id="UP000000589">
    <property type="component" value="Chromosome 9"/>
</dbReference>
<dbReference type="RNAct" id="Q8VCH0">
    <property type="molecule type" value="protein"/>
</dbReference>
<dbReference type="Bgee" id="ENSMUSG00000010651">
    <property type="expression patterns" value="Expressed in left lobe of liver and 189 other cell types or tissues"/>
</dbReference>
<dbReference type="ExpressionAtlas" id="Q8VCH0">
    <property type="expression patterns" value="baseline and differential"/>
</dbReference>
<dbReference type="GO" id="GO:0005739">
    <property type="term" value="C:mitochondrion"/>
    <property type="evidence" value="ECO:0007005"/>
    <property type="project" value="MGI"/>
</dbReference>
<dbReference type="GO" id="GO:0005782">
    <property type="term" value="C:peroxisomal matrix"/>
    <property type="evidence" value="ECO:0000314"/>
    <property type="project" value="MGI"/>
</dbReference>
<dbReference type="GO" id="GO:0003985">
    <property type="term" value="F:acetyl-CoA C-acetyltransferase activity"/>
    <property type="evidence" value="ECO:0007669"/>
    <property type="project" value="UniProtKB-EC"/>
</dbReference>
<dbReference type="GO" id="GO:0003988">
    <property type="term" value="F:acetyl-CoA C-acyltransferase activity"/>
    <property type="evidence" value="ECO:0000316"/>
    <property type="project" value="MGI"/>
</dbReference>
<dbReference type="GO" id="GO:0050633">
    <property type="term" value="F:acetyl-CoA C-myristoyltransferase activity"/>
    <property type="evidence" value="ECO:0007669"/>
    <property type="project" value="UniProtKB-EC"/>
</dbReference>
<dbReference type="GO" id="GO:0036109">
    <property type="term" value="P:alpha-linolenic acid metabolic process"/>
    <property type="evidence" value="ECO:0000316"/>
    <property type="project" value="MGI"/>
</dbReference>
<dbReference type="GO" id="GO:0033540">
    <property type="term" value="P:fatty acid beta-oxidation using acyl-CoA oxidase"/>
    <property type="evidence" value="ECO:0000315"/>
    <property type="project" value="MGI"/>
</dbReference>
<dbReference type="GO" id="GO:1901570">
    <property type="term" value="P:fatty acid derivative biosynthetic process"/>
    <property type="evidence" value="ECO:0000316"/>
    <property type="project" value="MGI"/>
</dbReference>
<dbReference type="GO" id="GO:0042759">
    <property type="term" value="P:long-chain fatty acid biosynthetic process"/>
    <property type="evidence" value="ECO:0000316"/>
    <property type="project" value="MGI"/>
</dbReference>
<dbReference type="GO" id="GO:0006636">
    <property type="term" value="P:unsaturated fatty acid biosynthetic process"/>
    <property type="evidence" value="ECO:0000316"/>
    <property type="project" value="MGI"/>
</dbReference>
<dbReference type="CDD" id="cd00751">
    <property type="entry name" value="thiolase"/>
    <property type="match status" value="1"/>
</dbReference>
<dbReference type="FunFam" id="3.40.47.10:FF:000035">
    <property type="entry name" value="3-ketoacyl-CoA thiolase A, peroxisomal"/>
    <property type="match status" value="1"/>
</dbReference>
<dbReference type="Gene3D" id="3.40.47.10">
    <property type="match status" value="1"/>
</dbReference>
<dbReference type="InterPro" id="IPR002155">
    <property type="entry name" value="Thiolase"/>
</dbReference>
<dbReference type="InterPro" id="IPR016039">
    <property type="entry name" value="Thiolase-like"/>
</dbReference>
<dbReference type="InterPro" id="IPR050215">
    <property type="entry name" value="Thiolase-like_sf_Thiolase"/>
</dbReference>
<dbReference type="InterPro" id="IPR020615">
    <property type="entry name" value="Thiolase_acyl_enz_int_AS"/>
</dbReference>
<dbReference type="InterPro" id="IPR020610">
    <property type="entry name" value="Thiolase_AS"/>
</dbReference>
<dbReference type="InterPro" id="IPR020617">
    <property type="entry name" value="Thiolase_C"/>
</dbReference>
<dbReference type="InterPro" id="IPR020613">
    <property type="entry name" value="Thiolase_CS"/>
</dbReference>
<dbReference type="InterPro" id="IPR020616">
    <property type="entry name" value="Thiolase_N"/>
</dbReference>
<dbReference type="NCBIfam" id="TIGR01930">
    <property type="entry name" value="AcCoA-C-Actrans"/>
    <property type="match status" value="1"/>
</dbReference>
<dbReference type="PANTHER" id="PTHR43853:SF17">
    <property type="entry name" value="3-KETOACYL-COA THIOLASE B, PEROXISOMAL"/>
    <property type="match status" value="1"/>
</dbReference>
<dbReference type="PANTHER" id="PTHR43853">
    <property type="entry name" value="3-KETOACYL-COA THIOLASE, PEROXISOMAL"/>
    <property type="match status" value="1"/>
</dbReference>
<dbReference type="Pfam" id="PF02803">
    <property type="entry name" value="Thiolase_C"/>
    <property type="match status" value="1"/>
</dbReference>
<dbReference type="Pfam" id="PF00108">
    <property type="entry name" value="Thiolase_N"/>
    <property type="match status" value="1"/>
</dbReference>
<dbReference type="PIRSF" id="PIRSF000429">
    <property type="entry name" value="Ac-CoA_Ac_transf"/>
    <property type="match status" value="1"/>
</dbReference>
<dbReference type="SUPFAM" id="SSF53901">
    <property type="entry name" value="Thiolase-like"/>
    <property type="match status" value="2"/>
</dbReference>
<dbReference type="PROSITE" id="PS00098">
    <property type="entry name" value="THIOLASE_1"/>
    <property type="match status" value="1"/>
</dbReference>
<dbReference type="PROSITE" id="PS00737">
    <property type="entry name" value="THIOLASE_2"/>
    <property type="match status" value="1"/>
</dbReference>
<dbReference type="PROSITE" id="PS00099">
    <property type="entry name" value="THIOLASE_3"/>
    <property type="match status" value="1"/>
</dbReference>
<accession>Q8VCH0</accession>
<proteinExistence type="evidence at protein level"/>
<keyword id="KW-0007">Acetylation</keyword>
<keyword id="KW-0012">Acyltransferase</keyword>
<keyword id="KW-0276">Fatty acid metabolism</keyword>
<keyword id="KW-0443">Lipid metabolism</keyword>
<keyword id="KW-0576">Peroxisome</keyword>
<keyword id="KW-1185">Reference proteome</keyword>
<keyword id="KW-0808">Transferase</keyword>
<keyword id="KW-0809">Transit peptide</keyword>
<reference key="1">
    <citation type="journal article" date="2004" name="BMC Biochem.">
        <title>Molecular cloning, gene structure and expression profile of two mouse peroxisomal 3-ketoacyl-CoA thiolase genes.</title>
        <authorList>
            <person name="Chevillard G."/>
            <person name="Clemencet M.-C."/>
            <person name="Etienne P."/>
            <person name="Martin P."/>
            <person name="Pineau T."/>
            <person name="Latruffe N."/>
            <person name="Nicolas-Frances V."/>
        </authorList>
    </citation>
    <scope>NUCLEOTIDE SEQUENCE [MRNA]</scope>
    <scope>TISSUE SPECIFICITY</scope>
    <scope>CATALYTIC ACTIVITY</scope>
    <scope>FUNCTION</scope>
    <scope>PATHWAY</scope>
    <source>
        <strain>C57BL/6J</strain>
        <tissue>Liver</tissue>
    </source>
</reference>
<reference key="2">
    <citation type="journal article" date="2004" name="Genome Res.">
        <title>The status, quality, and expansion of the NIH full-length cDNA project: the Mammalian Gene Collection (MGC).</title>
        <authorList>
            <consortium name="The MGC Project Team"/>
        </authorList>
    </citation>
    <scope>NUCLEOTIDE SEQUENCE [LARGE SCALE MRNA]</scope>
    <source>
        <strain>FVB/N</strain>
        <tissue>Liver</tissue>
    </source>
</reference>
<reference key="3">
    <citation type="journal article" date="2010" name="Cell">
        <title>A tissue-specific atlas of mouse protein phosphorylation and expression.</title>
        <authorList>
            <person name="Huttlin E.L."/>
            <person name="Jedrychowski M.P."/>
            <person name="Elias J.E."/>
            <person name="Goswami T."/>
            <person name="Rad R."/>
            <person name="Beausoleil S.A."/>
            <person name="Villen J."/>
            <person name="Haas W."/>
            <person name="Sowa M.E."/>
            <person name="Gygi S.P."/>
        </authorList>
    </citation>
    <scope>IDENTIFICATION BY MASS SPECTROMETRY [LARGE SCALE ANALYSIS]</scope>
    <source>
        <tissue>Kidney</tissue>
        <tissue>Liver</tissue>
    </source>
</reference>
<reference key="4">
    <citation type="journal article" date="2013" name="Proc. Natl. Acad. Sci. U.S.A.">
        <title>Label-free quantitative proteomics of the lysine acetylome in mitochondria identifies substrates of SIRT3 in metabolic pathways.</title>
        <authorList>
            <person name="Rardin M.J."/>
            <person name="Newman J.C."/>
            <person name="Held J.M."/>
            <person name="Cusack M.P."/>
            <person name="Sorensen D.J."/>
            <person name="Li B."/>
            <person name="Schilling B."/>
            <person name="Mooney S.D."/>
            <person name="Kahn C.R."/>
            <person name="Verdin E."/>
            <person name="Gibson B.W."/>
        </authorList>
    </citation>
    <scope>ACETYLATION [LARGE SCALE ANALYSIS] AT LYS-173</scope>
    <scope>IDENTIFICATION BY MASS SPECTROMETRY [LARGE SCALE ANALYSIS]</scope>
    <source>
        <tissue>Liver</tissue>
    </source>
</reference>
<sequence length="424" mass="43995">MHRLQVVLGHLAGRPESSSALQAAPCSAGFLQASASDVVVVHGRRTPIGRASRGCFKDTTPDELLSAVLTAVLQDVKLKPEQLGDISVGNVLQPGAGAIMARIAQFLSGIPETVPLSTVNRQCSSGLQAVANIAGGIRNGSYDIGMACGVESMTLSQRGNHGNISSRLLENEKARDCLIPMGITSENVAERFGVSRQKQDAFALASQQKAASAQSRGCFHAEIVPVTTTVLNDKGDKKTITVSQDEGVRPSTTMQGLAKLKPAFKDGGSTTAGNSSQVSDGAAAVLLARRSKAEELGLPILGVLRSYAVVGVPPDVMGIGPAYAIPAALQKAGLTVNDIDIFEINEAFASQAVYCVEKLGIPAEKVNPLGGAIALGHPLGCTGARQVVTLLNELKRRGRRAYGVVSMCIGTGMGAAAVFEYPGN</sequence>